<gene>
    <name evidence="1" type="primary">lepA</name>
    <name type="ordered locus">Tery_2425</name>
</gene>
<name>LEPA_TRIEI</name>
<feature type="chain" id="PRO_0000265724" description="Elongation factor 4">
    <location>
        <begin position="1"/>
        <end position="601"/>
    </location>
</feature>
<feature type="domain" description="tr-type G">
    <location>
        <begin position="7"/>
        <end position="189"/>
    </location>
</feature>
<feature type="binding site" evidence="1">
    <location>
        <begin position="19"/>
        <end position="24"/>
    </location>
    <ligand>
        <name>GTP</name>
        <dbReference type="ChEBI" id="CHEBI:37565"/>
    </ligand>
</feature>
<feature type="binding site" evidence="1">
    <location>
        <begin position="136"/>
        <end position="139"/>
    </location>
    <ligand>
        <name>GTP</name>
        <dbReference type="ChEBI" id="CHEBI:37565"/>
    </ligand>
</feature>
<keyword id="KW-0997">Cell inner membrane</keyword>
<keyword id="KW-1003">Cell membrane</keyword>
<keyword id="KW-0342">GTP-binding</keyword>
<keyword id="KW-0378">Hydrolase</keyword>
<keyword id="KW-0472">Membrane</keyword>
<keyword id="KW-0547">Nucleotide-binding</keyword>
<keyword id="KW-0648">Protein biosynthesis</keyword>
<comment type="function">
    <text evidence="1">Required for accurate and efficient protein synthesis under certain stress conditions. May act as a fidelity factor of the translation reaction, by catalyzing a one-codon backward translocation of tRNAs on improperly translocated ribosomes. Back-translocation proceeds from a post-translocation (POST) complex to a pre-translocation (PRE) complex, thus giving elongation factor G a second chance to translocate the tRNAs correctly. Binds to ribosomes in a GTP-dependent manner.</text>
</comment>
<comment type="catalytic activity">
    <reaction evidence="1">
        <text>GTP + H2O = GDP + phosphate + H(+)</text>
        <dbReference type="Rhea" id="RHEA:19669"/>
        <dbReference type="ChEBI" id="CHEBI:15377"/>
        <dbReference type="ChEBI" id="CHEBI:15378"/>
        <dbReference type="ChEBI" id="CHEBI:37565"/>
        <dbReference type="ChEBI" id="CHEBI:43474"/>
        <dbReference type="ChEBI" id="CHEBI:58189"/>
        <dbReference type="EC" id="3.6.5.n1"/>
    </reaction>
</comment>
<comment type="subcellular location">
    <subcellularLocation>
        <location evidence="1">Cell inner membrane</location>
        <topology evidence="1">Peripheral membrane protein</topology>
        <orientation evidence="1">Cytoplasmic side</orientation>
    </subcellularLocation>
</comment>
<comment type="similarity">
    <text evidence="1">Belongs to the TRAFAC class translation factor GTPase superfamily. Classic translation factor GTPase family. LepA subfamily.</text>
</comment>
<proteinExistence type="inferred from homology"/>
<organism>
    <name type="scientific">Trichodesmium erythraeum (strain IMS101)</name>
    <dbReference type="NCBI Taxonomy" id="203124"/>
    <lineage>
        <taxon>Bacteria</taxon>
        <taxon>Bacillati</taxon>
        <taxon>Cyanobacteriota</taxon>
        <taxon>Cyanophyceae</taxon>
        <taxon>Oscillatoriophycideae</taxon>
        <taxon>Oscillatoriales</taxon>
        <taxon>Microcoleaceae</taxon>
        <taxon>Trichodesmium</taxon>
    </lineage>
</organism>
<accession>Q112D2</accession>
<reference key="1">
    <citation type="journal article" date="2015" name="Proc. Natl. Acad. Sci. U.S.A.">
        <title>Trichodesmium genome maintains abundant, widespread noncoding DNA in situ, despite oligotrophic lifestyle.</title>
        <authorList>
            <person name="Walworth N."/>
            <person name="Pfreundt U."/>
            <person name="Nelson W.C."/>
            <person name="Mincer T."/>
            <person name="Heidelberg J.F."/>
            <person name="Fu F."/>
            <person name="Waterbury J.B."/>
            <person name="Glavina del Rio T."/>
            <person name="Goodwin L."/>
            <person name="Kyrpides N.C."/>
            <person name="Land M.L."/>
            <person name="Woyke T."/>
            <person name="Hutchins D.A."/>
            <person name="Hess W.R."/>
            <person name="Webb E.A."/>
        </authorList>
    </citation>
    <scope>NUCLEOTIDE SEQUENCE [LARGE SCALE GENOMIC DNA]</scope>
    <source>
        <strain>IMS101</strain>
    </source>
</reference>
<evidence type="ECO:0000255" key="1">
    <source>
        <dbReference type="HAMAP-Rule" id="MF_00071"/>
    </source>
</evidence>
<sequence>MTKVPVSHIRNFSIIAHIDHGKSTLADRLLQATGTVADREMKEQFLDTMDLERERGITIKLQAARMNYHAKDGEEYVLNLIDTPGHVDFSYEVSRSLAACEGALLVVDASQGVEAQTLANVYLALEHDLEIIPVLNKIDLPGAEPERVKEEIEEIIGLDCSGAILASAKEGIGIPEILESIVQLVPPPQDTIGEKLRALIFDSYYDSYRGVIVYFRVMDGTIAKGDRVRLMASKKEYEIDDLGVLSPTQQPVQELHAGEVGYFSAAIKAVEDARVGDTITLAKKQAQDPLPGYRSANPMVFCGLFPTDADQFPDLREALDKLKLNDAALSYEAETSSAMGFGFRCGFLGLLHMEIVQERLEREYGLDLIVTSPSVVYQVTTSKEEVILVDNPNFLPEPNLREKIEEPYVRVEMITPEEYVGTLMELGQSRRGVFKDMKYLAQGRTTLVYEIPLAEVVTDFFDQMKSRSRGYASMEYHLIGYRENPLVKLDIMINAEPVDALAIIVHRDKAYGVGRALAEKLKELIPRHQFKVPIQASIGSKVIASEHIPALRKDVLAKCYGGDISRKKKLLQKQAKGKKRMKSLGTVDVPQEAFMAVLRLD</sequence>
<protein>
    <recommendedName>
        <fullName evidence="1">Elongation factor 4</fullName>
        <shortName evidence="1">EF-4</shortName>
        <ecNumber evidence="1">3.6.5.n1</ecNumber>
    </recommendedName>
    <alternativeName>
        <fullName evidence="1">Ribosomal back-translocase LepA</fullName>
    </alternativeName>
</protein>
<dbReference type="EC" id="3.6.5.n1" evidence="1"/>
<dbReference type="EMBL" id="CP000393">
    <property type="protein sequence ID" value="ABG51642.1"/>
    <property type="molecule type" value="Genomic_DNA"/>
</dbReference>
<dbReference type="RefSeq" id="WP_011612008.1">
    <property type="nucleotide sequence ID" value="NC_008312.1"/>
</dbReference>
<dbReference type="SMR" id="Q112D2"/>
<dbReference type="STRING" id="203124.Tery_2425"/>
<dbReference type="KEGG" id="ter:Tery_2425"/>
<dbReference type="eggNOG" id="COG0481">
    <property type="taxonomic scope" value="Bacteria"/>
</dbReference>
<dbReference type="HOGENOM" id="CLU_009995_3_3_3"/>
<dbReference type="OrthoDB" id="580826at2"/>
<dbReference type="GO" id="GO:0005886">
    <property type="term" value="C:plasma membrane"/>
    <property type="evidence" value="ECO:0007669"/>
    <property type="project" value="UniProtKB-SubCell"/>
</dbReference>
<dbReference type="GO" id="GO:0005525">
    <property type="term" value="F:GTP binding"/>
    <property type="evidence" value="ECO:0007669"/>
    <property type="project" value="UniProtKB-KW"/>
</dbReference>
<dbReference type="GO" id="GO:0003924">
    <property type="term" value="F:GTPase activity"/>
    <property type="evidence" value="ECO:0007669"/>
    <property type="project" value="InterPro"/>
</dbReference>
<dbReference type="GO" id="GO:0043022">
    <property type="term" value="F:ribosome binding"/>
    <property type="evidence" value="ECO:0007669"/>
    <property type="project" value="TreeGrafter"/>
</dbReference>
<dbReference type="GO" id="GO:0045727">
    <property type="term" value="P:positive regulation of translation"/>
    <property type="evidence" value="ECO:0007669"/>
    <property type="project" value="TreeGrafter"/>
</dbReference>
<dbReference type="GO" id="GO:0006412">
    <property type="term" value="P:translation"/>
    <property type="evidence" value="ECO:0007669"/>
    <property type="project" value="UniProtKB-KW"/>
</dbReference>
<dbReference type="CDD" id="cd03699">
    <property type="entry name" value="EF4_II"/>
    <property type="match status" value="1"/>
</dbReference>
<dbReference type="CDD" id="cd16260">
    <property type="entry name" value="EF4_III"/>
    <property type="match status" value="1"/>
</dbReference>
<dbReference type="CDD" id="cd01890">
    <property type="entry name" value="LepA"/>
    <property type="match status" value="1"/>
</dbReference>
<dbReference type="CDD" id="cd03709">
    <property type="entry name" value="lepA_C"/>
    <property type="match status" value="1"/>
</dbReference>
<dbReference type="FunFam" id="3.40.50.300:FF:000078">
    <property type="entry name" value="Elongation factor 4"/>
    <property type="match status" value="1"/>
</dbReference>
<dbReference type="FunFam" id="2.40.30.10:FF:000015">
    <property type="entry name" value="Translation factor GUF1, mitochondrial"/>
    <property type="match status" value="1"/>
</dbReference>
<dbReference type="FunFam" id="3.30.70.240:FF:000007">
    <property type="entry name" value="Translation factor GUF1, mitochondrial"/>
    <property type="match status" value="1"/>
</dbReference>
<dbReference type="FunFam" id="3.30.70.2570:FF:000001">
    <property type="entry name" value="Translation factor GUF1, mitochondrial"/>
    <property type="match status" value="1"/>
</dbReference>
<dbReference type="FunFam" id="3.30.70.870:FF:000004">
    <property type="entry name" value="Translation factor GUF1, mitochondrial"/>
    <property type="match status" value="1"/>
</dbReference>
<dbReference type="Gene3D" id="3.30.70.240">
    <property type="match status" value="1"/>
</dbReference>
<dbReference type="Gene3D" id="3.30.70.2570">
    <property type="entry name" value="Elongation factor 4, C-terminal domain"/>
    <property type="match status" value="1"/>
</dbReference>
<dbReference type="Gene3D" id="3.30.70.870">
    <property type="entry name" value="Elongation Factor G (Translational Gtpase), domain 3"/>
    <property type="match status" value="1"/>
</dbReference>
<dbReference type="Gene3D" id="3.40.50.300">
    <property type="entry name" value="P-loop containing nucleotide triphosphate hydrolases"/>
    <property type="match status" value="1"/>
</dbReference>
<dbReference type="Gene3D" id="2.40.30.10">
    <property type="entry name" value="Translation factors"/>
    <property type="match status" value="1"/>
</dbReference>
<dbReference type="HAMAP" id="MF_03138">
    <property type="entry name" value="GUFP"/>
    <property type="match status" value="1"/>
</dbReference>
<dbReference type="HAMAP" id="MF_00071">
    <property type="entry name" value="LepA"/>
    <property type="match status" value="1"/>
</dbReference>
<dbReference type="InterPro" id="IPR006297">
    <property type="entry name" value="EF-4"/>
</dbReference>
<dbReference type="InterPro" id="IPR035647">
    <property type="entry name" value="EFG_III/V"/>
</dbReference>
<dbReference type="InterPro" id="IPR000640">
    <property type="entry name" value="EFG_V-like"/>
</dbReference>
<dbReference type="InterPro" id="IPR004161">
    <property type="entry name" value="EFTu-like_2"/>
</dbReference>
<dbReference type="InterPro" id="IPR031157">
    <property type="entry name" value="G_TR_CS"/>
</dbReference>
<dbReference type="InterPro" id="IPR027518">
    <property type="entry name" value="GUFP"/>
</dbReference>
<dbReference type="InterPro" id="IPR038363">
    <property type="entry name" value="LepA_C_sf"/>
</dbReference>
<dbReference type="InterPro" id="IPR013842">
    <property type="entry name" value="LepA_CTD"/>
</dbReference>
<dbReference type="InterPro" id="IPR035654">
    <property type="entry name" value="LepA_IV"/>
</dbReference>
<dbReference type="InterPro" id="IPR027417">
    <property type="entry name" value="P-loop_NTPase"/>
</dbReference>
<dbReference type="InterPro" id="IPR005225">
    <property type="entry name" value="Small_GTP-bd"/>
</dbReference>
<dbReference type="InterPro" id="IPR000795">
    <property type="entry name" value="T_Tr_GTP-bd_dom"/>
</dbReference>
<dbReference type="InterPro" id="IPR009000">
    <property type="entry name" value="Transl_B-barrel_sf"/>
</dbReference>
<dbReference type="NCBIfam" id="TIGR01393">
    <property type="entry name" value="lepA"/>
    <property type="match status" value="1"/>
</dbReference>
<dbReference type="NCBIfam" id="TIGR00231">
    <property type="entry name" value="small_GTP"/>
    <property type="match status" value="1"/>
</dbReference>
<dbReference type="PANTHER" id="PTHR43512:SF4">
    <property type="entry name" value="TRANSLATION FACTOR GUF1 HOMOLOG, CHLOROPLASTIC"/>
    <property type="match status" value="1"/>
</dbReference>
<dbReference type="PANTHER" id="PTHR43512">
    <property type="entry name" value="TRANSLATION FACTOR GUF1-RELATED"/>
    <property type="match status" value="1"/>
</dbReference>
<dbReference type="Pfam" id="PF00679">
    <property type="entry name" value="EFG_C"/>
    <property type="match status" value="1"/>
</dbReference>
<dbReference type="Pfam" id="PF00009">
    <property type="entry name" value="GTP_EFTU"/>
    <property type="match status" value="1"/>
</dbReference>
<dbReference type="Pfam" id="PF03144">
    <property type="entry name" value="GTP_EFTU_D2"/>
    <property type="match status" value="1"/>
</dbReference>
<dbReference type="Pfam" id="PF06421">
    <property type="entry name" value="LepA_C"/>
    <property type="match status" value="1"/>
</dbReference>
<dbReference type="PRINTS" id="PR00315">
    <property type="entry name" value="ELONGATNFCT"/>
</dbReference>
<dbReference type="SMART" id="SM00838">
    <property type="entry name" value="EFG_C"/>
    <property type="match status" value="1"/>
</dbReference>
<dbReference type="SUPFAM" id="SSF54980">
    <property type="entry name" value="EF-G C-terminal domain-like"/>
    <property type="match status" value="2"/>
</dbReference>
<dbReference type="SUPFAM" id="SSF52540">
    <property type="entry name" value="P-loop containing nucleoside triphosphate hydrolases"/>
    <property type="match status" value="1"/>
</dbReference>
<dbReference type="SUPFAM" id="SSF50447">
    <property type="entry name" value="Translation proteins"/>
    <property type="match status" value="1"/>
</dbReference>
<dbReference type="PROSITE" id="PS00301">
    <property type="entry name" value="G_TR_1"/>
    <property type="match status" value="1"/>
</dbReference>
<dbReference type="PROSITE" id="PS51722">
    <property type="entry name" value="G_TR_2"/>
    <property type="match status" value="1"/>
</dbReference>